<dbReference type="EMBL" id="CP000546">
    <property type="protein sequence ID" value="ABN00955.1"/>
    <property type="molecule type" value="Genomic_DNA"/>
</dbReference>
<dbReference type="RefSeq" id="WP_004185533.1">
    <property type="nucleotide sequence ID" value="NC_008836.1"/>
</dbReference>
<dbReference type="SMR" id="A2S999"/>
<dbReference type="KEGG" id="bml:BMA10229_A2560"/>
<dbReference type="HOGENOM" id="CLU_056339_0_0_4"/>
<dbReference type="Proteomes" id="UP000002283">
    <property type="component" value="Chromosome I"/>
</dbReference>
<dbReference type="GO" id="GO:0005737">
    <property type="term" value="C:cytoplasm"/>
    <property type="evidence" value="ECO:0007669"/>
    <property type="project" value="UniProtKB-SubCell"/>
</dbReference>
<dbReference type="GO" id="GO:0016151">
    <property type="term" value="F:nickel cation binding"/>
    <property type="evidence" value="ECO:0007669"/>
    <property type="project" value="UniProtKB-UniRule"/>
</dbReference>
<dbReference type="HAMAP" id="MF_01384">
    <property type="entry name" value="UreD"/>
    <property type="match status" value="1"/>
</dbReference>
<dbReference type="InterPro" id="IPR002669">
    <property type="entry name" value="UreD"/>
</dbReference>
<dbReference type="PANTHER" id="PTHR33643">
    <property type="entry name" value="UREASE ACCESSORY PROTEIN D"/>
    <property type="match status" value="1"/>
</dbReference>
<dbReference type="PANTHER" id="PTHR33643:SF1">
    <property type="entry name" value="UREASE ACCESSORY PROTEIN D"/>
    <property type="match status" value="1"/>
</dbReference>
<dbReference type="Pfam" id="PF01774">
    <property type="entry name" value="UreD"/>
    <property type="match status" value="1"/>
</dbReference>
<keyword id="KW-0143">Chaperone</keyword>
<keyword id="KW-0963">Cytoplasm</keyword>
<keyword id="KW-0996">Nickel insertion</keyword>
<feature type="chain" id="PRO_0000340434" description="Urease accessory protein UreD">
    <location>
        <begin position="1"/>
        <end position="291"/>
    </location>
</feature>
<name>URED_BURM9</name>
<sequence length="291" mass="30980">MSAHEPHTSLVRPAAKAWHARLELGFERQPGGRTALAHRRHVGPLRVQRALYPEGDAICHAVIVHPPGGVAGGDRLEIDVRLDAGTHAVLTTPGATKWYKSNGLDARQRIDIDVGAHAKLDWLPQNNLFFDAAHASLEFVLALGDGASVLGWDATQLGRQAAGEAWSAGSIASFSKIVGPSGRPLWVERARLDAGDPLRAAPQGLGGFAVYGTLWALGAACTEALAESIAPALPFDDALRAGVTCVAPGTLLIRALAHSMEALQRLLAEQWLALRPIVHGVDPKPLRLWQT</sequence>
<reference key="1">
    <citation type="journal article" date="2010" name="Genome Biol. Evol.">
        <title>Continuing evolution of Burkholderia mallei through genome reduction and large-scale rearrangements.</title>
        <authorList>
            <person name="Losada L."/>
            <person name="Ronning C.M."/>
            <person name="DeShazer D."/>
            <person name="Woods D."/>
            <person name="Fedorova N."/>
            <person name="Kim H.S."/>
            <person name="Shabalina S.A."/>
            <person name="Pearson T.R."/>
            <person name="Brinkac L."/>
            <person name="Tan P."/>
            <person name="Nandi T."/>
            <person name="Crabtree J."/>
            <person name="Badger J."/>
            <person name="Beckstrom-Sternberg S."/>
            <person name="Saqib M."/>
            <person name="Schutzer S.E."/>
            <person name="Keim P."/>
            <person name="Nierman W.C."/>
        </authorList>
    </citation>
    <scope>NUCLEOTIDE SEQUENCE [LARGE SCALE GENOMIC DNA]</scope>
    <source>
        <strain>NCTC 10229</strain>
    </source>
</reference>
<protein>
    <recommendedName>
        <fullName evidence="1">Urease accessory protein UreD</fullName>
    </recommendedName>
</protein>
<accession>A2S999</accession>
<gene>
    <name evidence="1" type="primary">ureD</name>
    <name type="ordered locus">BMA10229_A2560</name>
</gene>
<evidence type="ECO:0000255" key="1">
    <source>
        <dbReference type="HAMAP-Rule" id="MF_01384"/>
    </source>
</evidence>
<proteinExistence type="inferred from homology"/>
<comment type="function">
    <text evidence="1">Required for maturation of urease via the functional incorporation of the urease nickel metallocenter.</text>
</comment>
<comment type="subunit">
    <text evidence="1">UreD, UreF and UreG form a complex that acts as a GTP-hydrolysis-dependent molecular chaperone, activating the urease apoprotein by helping to assemble the nickel containing metallocenter of UreC. The UreE protein probably delivers the nickel.</text>
</comment>
<comment type="subcellular location">
    <subcellularLocation>
        <location evidence="1">Cytoplasm</location>
    </subcellularLocation>
</comment>
<comment type="similarity">
    <text evidence="1">Belongs to the UreD family.</text>
</comment>
<organism>
    <name type="scientific">Burkholderia mallei (strain NCTC 10229)</name>
    <dbReference type="NCBI Taxonomy" id="412022"/>
    <lineage>
        <taxon>Bacteria</taxon>
        <taxon>Pseudomonadati</taxon>
        <taxon>Pseudomonadota</taxon>
        <taxon>Betaproteobacteria</taxon>
        <taxon>Burkholderiales</taxon>
        <taxon>Burkholderiaceae</taxon>
        <taxon>Burkholderia</taxon>
        <taxon>pseudomallei group</taxon>
    </lineage>
</organism>